<proteinExistence type="evidence at protein level"/>
<comment type="function">
    <text evidence="2">Involved in the biosynthesis of A factor (2-isocapryloyl-3R-hydroxymethyl-gamma-butyrolactone), a gamma-butyrolactone autoregulator that triggers secondary metabolism and morphogenesis in Streptomyces (PubMed:17277085). Catalyzes the reduction of the butenolide phosphate produced by nonenzymatic intramolecular condensation of the 8-methyl-3-oxononanoyl-DHAP ester (PubMed:17277085).</text>
</comment>
<comment type="catalytic activity">
    <reaction evidence="2">
        <text>a [(3S,4R)-4-alkanoyl-5-oxooxolan-3-yl]methyl phosphate + NADP(+) = a (4-alkanoyl-5-oxo-2,5-dihydrofuran-3-yl)methyl phosphate + NADPH + H(+)</text>
        <dbReference type="Rhea" id="RHEA:55148"/>
        <dbReference type="ChEBI" id="CHEBI:15378"/>
        <dbReference type="ChEBI" id="CHEBI:57783"/>
        <dbReference type="ChEBI" id="CHEBI:58349"/>
        <dbReference type="ChEBI" id="CHEBI:138603"/>
        <dbReference type="ChEBI" id="CHEBI:138621"/>
        <dbReference type="EC" id="1.3.1.113"/>
    </reaction>
    <physiologicalReaction direction="right-to-left" evidence="2">
        <dbReference type="Rhea" id="RHEA:55150"/>
    </physiologicalReaction>
</comment>
<comment type="catalytic activity">
    <reaction evidence="2">
        <text>[(3S,4R)-4-(6-methylheptanoyl)-5-oxooxolan-3-yl]methyl phosphate + NADP(+) = [4-(6-methylheptanoyl)-5-oxo-2H-furan-3-yl]methyl phosphate + NADPH + H(+)</text>
        <dbReference type="Rhea" id="RHEA:55144"/>
        <dbReference type="ChEBI" id="CHEBI:15378"/>
        <dbReference type="ChEBI" id="CHEBI:57783"/>
        <dbReference type="ChEBI" id="CHEBI:58349"/>
        <dbReference type="ChEBI" id="CHEBI:138604"/>
        <dbReference type="ChEBI" id="CHEBI:138605"/>
        <dbReference type="EC" id="1.3.1.113"/>
    </reaction>
    <physiologicalReaction direction="right-to-left" evidence="2">
        <dbReference type="Rhea" id="RHEA:55146"/>
    </physiologicalReaction>
</comment>
<comment type="similarity">
    <text evidence="4">Belongs to the NmrA-type oxidoreductase family.</text>
</comment>
<accession>B1VN94</accession>
<evidence type="ECO:0000250" key="1">
    <source>
        <dbReference type="UniProtKB" id="P39315"/>
    </source>
</evidence>
<evidence type="ECO:0000269" key="2">
    <source>
    </source>
</evidence>
<evidence type="ECO:0000303" key="3">
    <source>
    </source>
</evidence>
<evidence type="ECO:0000305" key="4"/>
<evidence type="ECO:0000312" key="5">
    <source>
        <dbReference type="EMBL" id="BAG23719.1"/>
    </source>
</evidence>
<name>BPRA_STRGG</name>
<keyword id="KW-0521">NADP</keyword>
<keyword id="KW-0560">Oxidoreductase</keyword>
<feature type="chain" id="PRO_0000450074" description="(4-alkanoyl-5-oxo-2,5-dihydrofuran-3-yl)methyl phosphate reductase">
    <location>
        <begin position="1"/>
        <end position="282"/>
    </location>
</feature>
<feature type="binding site" evidence="1">
    <location>
        <begin position="6"/>
        <end position="11"/>
    </location>
    <ligand>
        <name>NADP(+)</name>
        <dbReference type="ChEBI" id="CHEBI:58349"/>
    </ligand>
</feature>
<organism>
    <name type="scientific">Streptomyces griseus subsp. griseus (strain JCM 4626 / CBS 651.72 / NBRC 13350 / KCC S-0626 / ISP 5235)</name>
    <dbReference type="NCBI Taxonomy" id="455632"/>
    <lineage>
        <taxon>Bacteria</taxon>
        <taxon>Bacillati</taxon>
        <taxon>Actinomycetota</taxon>
        <taxon>Actinomycetes</taxon>
        <taxon>Kitasatosporales</taxon>
        <taxon>Streptomycetaceae</taxon>
        <taxon>Streptomyces</taxon>
    </lineage>
</organism>
<gene>
    <name evidence="3" type="primary">bprA</name>
    <name evidence="5" type="ordered locus">SGR_6890</name>
</gene>
<reference key="1">
    <citation type="journal article" date="2008" name="J. Bacteriol.">
        <title>Genome sequence of the streptomycin-producing microorganism Streptomyces griseus IFO 13350.</title>
        <authorList>
            <person name="Ohnishi Y."/>
            <person name="Ishikawa J."/>
            <person name="Hara H."/>
            <person name="Suzuki H."/>
            <person name="Ikenoya M."/>
            <person name="Ikeda H."/>
            <person name="Yamashita A."/>
            <person name="Hattori M."/>
            <person name="Horinouchi S."/>
        </authorList>
    </citation>
    <scope>NUCLEOTIDE SEQUENCE [LARGE SCALE GENOMIC DNA]</scope>
    <source>
        <strain>JCM 4626 / CBS 651.72 / NBRC 13350 / KCC S-0626 / ISP 5235</strain>
    </source>
</reference>
<reference key="2">
    <citation type="journal article" date="2007" name="Proc. Natl. Acad. Sci. U.S.A.">
        <title>Biosynthesis of gamma-butyrolactone autoregulators that switch on secondary metabolism and morphological development in Streptomyces.</title>
        <authorList>
            <person name="Kato J.Y."/>
            <person name="Funa N."/>
            <person name="Watanabe H."/>
            <person name="Ohnishi Y."/>
            <person name="Horinouchi S."/>
        </authorList>
    </citation>
    <scope>FUNCTION</scope>
    <scope>CATALYTIC ACTIVITY</scope>
    <source>
        <strain>JCM 4626 / CBS 651.72 / NBRC 13350 / KCC S-0626 / ISP 5235</strain>
    </source>
</reference>
<protein>
    <recommendedName>
        <fullName evidence="4">(4-alkanoyl-5-oxo-2,5-dihydrofuran-3-yl)methyl phosphate reductase</fullName>
        <ecNumber evidence="2">1.3.1.113</ecNumber>
    </recommendedName>
    <alternativeName>
        <fullName evidence="3">Butenolide phosphate reductase</fullName>
    </alternativeName>
</protein>
<dbReference type="EC" id="1.3.1.113" evidence="2"/>
<dbReference type="EMBL" id="AP009493">
    <property type="protein sequence ID" value="BAG23719.1"/>
    <property type="molecule type" value="Genomic_DNA"/>
</dbReference>
<dbReference type="RefSeq" id="WP_012382293.1">
    <property type="nucleotide sequence ID" value="NC_010572.1"/>
</dbReference>
<dbReference type="SMR" id="B1VN94"/>
<dbReference type="KEGG" id="sgr:SGR_6890"/>
<dbReference type="PATRIC" id="fig|455632.4.peg.7072"/>
<dbReference type="eggNOG" id="COG0702">
    <property type="taxonomic scope" value="Bacteria"/>
</dbReference>
<dbReference type="HOGENOM" id="CLU_007383_10_6_11"/>
<dbReference type="BioCyc" id="MetaCyc:MONOMER-20193"/>
<dbReference type="Proteomes" id="UP000001685">
    <property type="component" value="Chromosome"/>
</dbReference>
<dbReference type="GO" id="GO:0016491">
    <property type="term" value="F:oxidoreductase activity"/>
    <property type="evidence" value="ECO:0007669"/>
    <property type="project" value="UniProtKB-KW"/>
</dbReference>
<dbReference type="Gene3D" id="3.40.50.720">
    <property type="entry name" value="NAD(P)-binding Rossmann-like Domain"/>
    <property type="match status" value="1"/>
</dbReference>
<dbReference type="Gene3D" id="3.90.25.10">
    <property type="entry name" value="UDP-galactose 4-epimerase, domain 1"/>
    <property type="match status" value="1"/>
</dbReference>
<dbReference type="InterPro" id="IPR051604">
    <property type="entry name" value="Ergot_Alk_Oxidoreductase"/>
</dbReference>
<dbReference type="InterPro" id="IPR036291">
    <property type="entry name" value="NAD(P)-bd_dom_sf"/>
</dbReference>
<dbReference type="InterPro" id="IPR008030">
    <property type="entry name" value="NmrA-like"/>
</dbReference>
<dbReference type="PANTHER" id="PTHR43162">
    <property type="match status" value="1"/>
</dbReference>
<dbReference type="PANTHER" id="PTHR43162:SF1">
    <property type="entry name" value="PRESTALK A DIFFERENTIATION PROTEIN A"/>
    <property type="match status" value="1"/>
</dbReference>
<dbReference type="Pfam" id="PF05368">
    <property type="entry name" value="NmrA"/>
    <property type="match status" value="1"/>
</dbReference>
<dbReference type="SUPFAM" id="SSF51735">
    <property type="entry name" value="NAD(P)-binding Rossmann-fold domains"/>
    <property type="match status" value="1"/>
</dbReference>
<sequence>MILVTGATGAVGREVAGRLADAGPVRILARRPERLTVRGTGVEVVQGAYGDRAALDRALRGVDAVFLVTNDPTEPDDERVAAAAAAAGVRHLVKLSMMAVEEPDAEDFITRRQRENEQAVRDSGVPWTFVRPRTFMSNTLSWAPGIRSAGVVRALYGDAPVACVDPRDVAAVAVAALTGTGHEGRAYAVSGPEAITAREQTAQLSRVLGRPLRFEELGVDAARTALMAKYPPPVAEAFLQSAERQRTGAKASVVPTVQELTGRPARPFRDWSAEHAEAFAPE</sequence>